<evidence type="ECO:0000255" key="1">
    <source>
        <dbReference type="HAMAP-Rule" id="MF_00600"/>
    </source>
</evidence>
<name>CH60_STRPJ</name>
<proteinExistence type="inferred from homology"/>
<accession>B8ZNK9</accession>
<comment type="function">
    <text evidence="1">Together with its co-chaperonin GroES, plays an essential role in assisting protein folding. The GroEL-GroES system forms a nano-cage that allows encapsulation of the non-native substrate proteins and provides a physical environment optimized to promote and accelerate protein folding.</text>
</comment>
<comment type="catalytic activity">
    <reaction evidence="1">
        <text>ATP + H2O + a folded polypeptide = ADP + phosphate + an unfolded polypeptide.</text>
        <dbReference type="EC" id="5.6.1.7"/>
    </reaction>
</comment>
<comment type="subunit">
    <text evidence="1">Forms a cylinder of 14 subunits composed of two heptameric rings stacked back-to-back. Interacts with the co-chaperonin GroES.</text>
</comment>
<comment type="subcellular location">
    <subcellularLocation>
        <location evidence="1">Cytoplasm</location>
    </subcellularLocation>
</comment>
<comment type="similarity">
    <text evidence="1">Belongs to the chaperonin (HSP60) family.</text>
</comment>
<reference key="1">
    <citation type="journal article" date="2009" name="J. Bacteriol.">
        <title>Role of conjugative elements in the evolution of the multidrug-resistant pandemic clone Streptococcus pneumoniae Spain23F ST81.</title>
        <authorList>
            <person name="Croucher N.J."/>
            <person name="Walker D."/>
            <person name="Romero P."/>
            <person name="Lennard N."/>
            <person name="Paterson G.K."/>
            <person name="Bason N.C."/>
            <person name="Mitchell A.M."/>
            <person name="Quail M.A."/>
            <person name="Andrew P.W."/>
            <person name="Parkhill J."/>
            <person name="Bentley S.D."/>
            <person name="Mitchell T.J."/>
        </authorList>
    </citation>
    <scope>NUCLEOTIDE SEQUENCE [LARGE SCALE GENOMIC DNA]</scope>
    <source>
        <strain>ATCC 700669 / Spain 23F-1</strain>
    </source>
</reference>
<feature type="chain" id="PRO_1000147045" description="Chaperonin GroEL">
    <location>
        <begin position="1"/>
        <end position="540"/>
    </location>
</feature>
<feature type="binding site" evidence="1">
    <location>
        <begin position="29"/>
        <end position="32"/>
    </location>
    <ligand>
        <name>ATP</name>
        <dbReference type="ChEBI" id="CHEBI:30616"/>
    </ligand>
</feature>
<feature type="binding site" evidence="1">
    <location>
        <begin position="86"/>
        <end position="90"/>
    </location>
    <ligand>
        <name>ATP</name>
        <dbReference type="ChEBI" id="CHEBI:30616"/>
    </ligand>
</feature>
<feature type="binding site" evidence="1">
    <location>
        <position position="413"/>
    </location>
    <ligand>
        <name>ATP</name>
        <dbReference type="ChEBI" id="CHEBI:30616"/>
    </ligand>
</feature>
<feature type="binding site" evidence="1">
    <location>
        <begin position="476"/>
        <end position="478"/>
    </location>
    <ligand>
        <name>ATP</name>
        <dbReference type="ChEBI" id="CHEBI:30616"/>
    </ligand>
</feature>
<feature type="binding site" evidence="1">
    <location>
        <position position="492"/>
    </location>
    <ligand>
        <name>ATP</name>
        <dbReference type="ChEBI" id="CHEBI:30616"/>
    </ligand>
</feature>
<keyword id="KW-0067">ATP-binding</keyword>
<keyword id="KW-0143">Chaperone</keyword>
<keyword id="KW-0963">Cytoplasm</keyword>
<keyword id="KW-0413">Isomerase</keyword>
<keyword id="KW-0547">Nucleotide-binding</keyword>
<sequence>MSKEIKFSSDARSAMVRGVDILADTVKVTLGPKGRNVVLEKSFGSPLITNDGVTIAKEIELEDHFENMGAKLVSEVASKTNDIAGDGTTTATVLTQAIVREGIKNVTAGANPIGIRRGIETAVAAAVEALKNNAIPVANKEAIAQVAAVSSRSEKVGEYISEAMEKVGKDGVITIEESRGMETELEVVEGMQFDRGYLSQYMVTDSEKMVADLENPYILITDKKISNIQEILPLLESILQSNRPLLIIADDVDGEALPTLVLNKIRGTFNVVAVKAPGFGDRRKAMLEDIAILTGGTVITEDLGLELKDATIEALGQAARVTVDKDSTVIVEGAGNPEAISHRVAVIKSQIETTTSEFDREKLQERLAKLSGGVAVIKVGAATETELKEMKLRIEDALNATRAAVEEGIVAGGGTALANVIPAVATLELTGDEATGRNIVLRALEEPVRQIAHNAGFEGSIVIDRLKNAELGIGFNAATGEWVNMIDQGIIDPVKVSRSALQNAASVASLILTTEAVVANKPEPVAPAPAMDPSMMGGMM</sequence>
<dbReference type="EC" id="5.6.1.7" evidence="1"/>
<dbReference type="EMBL" id="FM211187">
    <property type="protein sequence ID" value="CAR69683.1"/>
    <property type="molecule type" value="Genomic_DNA"/>
</dbReference>
<dbReference type="RefSeq" id="WP_000031573.1">
    <property type="nucleotide sequence ID" value="NC_011900.1"/>
</dbReference>
<dbReference type="SMR" id="B8ZNK9"/>
<dbReference type="GeneID" id="45652869"/>
<dbReference type="KEGG" id="sne:SPN23F19300"/>
<dbReference type="HOGENOM" id="CLU_016503_3_0_9"/>
<dbReference type="GO" id="GO:0005737">
    <property type="term" value="C:cytoplasm"/>
    <property type="evidence" value="ECO:0007669"/>
    <property type="project" value="UniProtKB-SubCell"/>
</dbReference>
<dbReference type="GO" id="GO:0005524">
    <property type="term" value="F:ATP binding"/>
    <property type="evidence" value="ECO:0007669"/>
    <property type="project" value="UniProtKB-UniRule"/>
</dbReference>
<dbReference type="GO" id="GO:0140662">
    <property type="term" value="F:ATP-dependent protein folding chaperone"/>
    <property type="evidence" value="ECO:0007669"/>
    <property type="project" value="InterPro"/>
</dbReference>
<dbReference type="GO" id="GO:0016853">
    <property type="term" value="F:isomerase activity"/>
    <property type="evidence" value="ECO:0007669"/>
    <property type="project" value="UniProtKB-KW"/>
</dbReference>
<dbReference type="GO" id="GO:0051082">
    <property type="term" value="F:unfolded protein binding"/>
    <property type="evidence" value="ECO:0007669"/>
    <property type="project" value="UniProtKB-UniRule"/>
</dbReference>
<dbReference type="GO" id="GO:0042026">
    <property type="term" value="P:protein refolding"/>
    <property type="evidence" value="ECO:0007669"/>
    <property type="project" value="UniProtKB-UniRule"/>
</dbReference>
<dbReference type="CDD" id="cd03344">
    <property type="entry name" value="GroEL"/>
    <property type="match status" value="1"/>
</dbReference>
<dbReference type="FunFam" id="1.10.560.10:FF:000001">
    <property type="entry name" value="60 kDa chaperonin"/>
    <property type="match status" value="1"/>
</dbReference>
<dbReference type="FunFam" id="3.50.7.10:FF:000001">
    <property type="entry name" value="60 kDa chaperonin"/>
    <property type="match status" value="1"/>
</dbReference>
<dbReference type="Gene3D" id="3.50.7.10">
    <property type="entry name" value="GroEL"/>
    <property type="match status" value="1"/>
</dbReference>
<dbReference type="Gene3D" id="1.10.560.10">
    <property type="entry name" value="GroEL-like equatorial domain"/>
    <property type="match status" value="1"/>
</dbReference>
<dbReference type="Gene3D" id="3.30.260.10">
    <property type="entry name" value="TCP-1-like chaperonin intermediate domain"/>
    <property type="match status" value="1"/>
</dbReference>
<dbReference type="HAMAP" id="MF_00600">
    <property type="entry name" value="CH60"/>
    <property type="match status" value="1"/>
</dbReference>
<dbReference type="InterPro" id="IPR018370">
    <property type="entry name" value="Chaperonin_Cpn60_CS"/>
</dbReference>
<dbReference type="InterPro" id="IPR001844">
    <property type="entry name" value="Cpn60/GroEL"/>
</dbReference>
<dbReference type="InterPro" id="IPR002423">
    <property type="entry name" value="Cpn60/GroEL/TCP-1"/>
</dbReference>
<dbReference type="InterPro" id="IPR027409">
    <property type="entry name" value="GroEL-like_apical_dom_sf"/>
</dbReference>
<dbReference type="InterPro" id="IPR027413">
    <property type="entry name" value="GROEL-like_equatorial_sf"/>
</dbReference>
<dbReference type="InterPro" id="IPR027410">
    <property type="entry name" value="TCP-1-like_intermed_sf"/>
</dbReference>
<dbReference type="NCBIfam" id="TIGR02348">
    <property type="entry name" value="GroEL"/>
    <property type="match status" value="1"/>
</dbReference>
<dbReference type="NCBIfam" id="NF000592">
    <property type="entry name" value="PRK00013.1"/>
    <property type="match status" value="1"/>
</dbReference>
<dbReference type="NCBIfam" id="NF009487">
    <property type="entry name" value="PRK12849.1"/>
    <property type="match status" value="1"/>
</dbReference>
<dbReference type="NCBIfam" id="NF009488">
    <property type="entry name" value="PRK12850.1"/>
    <property type="match status" value="1"/>
</dbReference>
<dbReference type="NCBIfam" id="NF009489">
    <property type="entry name" value="PRK12851.1"/>
    <property type="match status" value="1"/>
</dbReference>
<dbReference type="PANTHER" id="PTHR45633">
    <property type="entry name" value="60 KDA HEAT SHOCK PROTEIN, MITOCHONDRIAL"/>
    <property type="match status" value="1"/>
</dbReference>
<dbReference type="Pfam" id="PF00118">
    <property type="entry name" value="Cpn60_TCP1"/>
    <property type="match status" value="1"/>
</dbReference>
<dbReference type="PRINTS" id="PR00298">
    <property type="entry name" value="CHAPERONIN60"/>
</dbReference>
<dbReference type="SUPFAM" id="SSF52029">
    <property type="entry name" value="GroEL apical domain-like"/>
    <property type="match status" value="1"/>
</dbReference>
<dbReference type="SUPFAM" id="SSF48592">
    <property type="entry name" value="GroEL equatorial domain-like"/>
    <property type="match status" value="1"/>
</dbReference>
<dbReference type="SUPFAM" id="SSF54849">
    <property type="entry name" value="GroEL-intermediate domain like"/>
    <property type="match status" value="1"/>
</dbReference>
<dbReference type="PROSITE" id="PS00296">
    <property type="entry name" value="CHAPERONINS_CPN60"/>
    <property type="match status" value="1"/>
</dbReference>
<protein>
    <recommendedName>
        <fullName evidence="1">Chaperonin GroEL</fullName>
        <ecNumber evidence="1">5.6.1.7</ecNumber>
    </recommendedName>
    <alternativeName>
        <fullName evidence="1">60 kDa chaperonin</fullName>
    </alternativeName>
    <alternativeName>
        <fullName evidence="1">Chaperonin-60</fullName>
        <shortName evidence="1">Cpn60</shortName>
    </alternativeName>
</protein>
<gene>
    <name evidence="1" type="primary">groEL</name>
    <name evidence="1" type="synonym">groL</name>
    <name type="ordered locus">SPN23F19300</name>
</gene>
<organism>
    <name type="scientific">Streptococcus pneumoniae (strain ATCC 700669 / Spain 23F-1)</name>
    <dbReference type="NCBI Taxonomy" id="561276"/>
    <lineage>
        <taxon>Bacteria</taxon>
        <taxon>Bacillati</taxon>
        <taxon>Bacillota</taxon>
        <taxon>Bacilli</taxon>
        <taxon>Lactobacillales</taxon>
        <taxon>Streptococcaceae</taxon>
        <taxon>Streptococcus</taxon>
    </lineage>
</organism>